<keyword id="KW-0025">Alternative splicing</keyword>
<keyword id="KW-0195">Cyclin</keyword>
<keyword id="KW-1185">Reference proteome</keyword>
<gene>
    <name type="primary">CYCT1_2</name>
    <name type="ordered locus">Os02g0438200</name>
    <name type="ordered locus">LOC_Os02g24190</name>
    <name type="ORF">OJ1570_H12.4-1</name>
    <name type="ORF">OJ1570_H12.4-2</name>
    <name evidence="4" type="ORF">OsJ_06547</name>
</gene>
<proteinExistence type="evidence at transcript level"/>
<feature type="chain" id="PRO_0000287059" description="Cyclin-T1-2">
    <location>
        <begin position="1"/>
        <end position="630"/>
    </location>
</feature>
<feature type="region of interest" description="Disordered" evidence="1">
    <location>
        <begin position="288"/>
        <end position="313"/>
    </location>
</feature>
<feature type="region of interest" description="Disordered" evidence="1">
    <location>
        <begin position="410"/>
        <end position="439"/>
    </location>
</feature>
<feature type="compositionally biased region" description="Low complexity" evidence="1">
    <location>
        <begin position="288"/>
        <end position="297"/>
    </location>
</feature>
<feature type="compositionally biased region" description="Polar residues" evidence="1">
    <location>
        <begin position="421"/>
        <end position="439"/>
    </location>
</feature>
<feature type="splice variant" id="VSP_025287" description="In isoform 2." evidence="2">
    <location>
        <begin position="1"/>
        <end position="147"/>
    </location>
</feature>
<feature type="splice variant" id="VSP_025288" description="In isoform 2." evidence="2">
    <original>RLVLTTVRFDFNIQHPY</original>
    <variation>MEQCTGGTQLQLEESTR</variation>
    <location>
        <begin position="148"/>
        <end position="164"/>
    </location>
</feature>
<reference key="1">
    <citation type="journal article" date="2005" name="Nature">
        <title>The map-based sequence of the rice genome.</title>
        <authorList>
            <consortium name="International rice genome sequencing project (IRGSP)"/>
        </authorList>
    </citation>
    <scope>NUCLEOTIDE SEQUENCE [LARGE SCALE GENOMIC DNA]</scope>
    <source>
        <strain>cv. Nipponbare</strain>
    </source>
</reference>
<reference key="2">
    <citation type="journal article" date="2008" name="Nucleic Acids Res.">
        <title>The rice annotation project database (RAP-DB): 2008 update.</title>
        <authorList>
            <consortium name="The rice annotation project (RAP)"/>
        </authorList>
    </citation>
    <scope>GENOME REANNOTATION</scope>
    <source>
        <strain>cv. Nipponbare</strain>
    </source>
</reference>
<reference key="3">
    <citation type="journal article" date="2013" name="Rice">
        <title>Improvement of the Oryza sativa Nipponbare reference genome using next generation sequence and optical map data.</title>
        <authorList>
            <person name="Kawahara Y."/>
            <person name="de la Bastide M."/>
            <person name="Hamilton J.P."/>
            <person name="Kanamori H."/>
            <person name="McCombie W.R."/>
            <person name="Ouyang S."/>
            <person name="Schwartz D.C."/>
            <person name="Tanaka T."/>
            <person name="Wu J."/>
            <person name="Zhou S."/>
            <person name="Childs K.L."/>
            <person name="Davidson R.M."/>
            <person name="Lin H."/>
            <person name="Quesada-Ocampo L."/>
            <person name="Vaillancourt B."/>
            <person name="Sakai H."/>
            <person name="Lee S.S."/>
            <person name="Kim J."/>
            <person name="Numa H."/>
            <person name="Itoh T."/>
            <person name="Buell C.R."/>
            <person name="Matsumoto T."/>
        </authorList>
    </citation>
    <scope>GENOME REANNOTATION</scope>
    <source>
        <strain>cv. Nipponbare</strain>
    </source>
</reference>
<reference key="4">
    <citation type="journal article" date="2005" name="PLoS Biol.">
        <title>The genomes of Oryza sativa: a history of duplications.</title>
        <authorList>
            <person name="Yu J."/>
            <person name="Wang J."/>
            <person name="Lin W."/>
            <person name="Li S."/>
            <person name="Li H."/>
            <person name="Zhou J."/>
            <person name="Ni P."/>
            <person name="Dong W."/>
            <person name="Hu S."/>
            <person name="Zeng C."/>
            <person name="Zhang J."/>
            <person name="Zhang Y."/>
            <person name="Li R."/>
            <person name="Xu Z."/>
            <person name="Li S."/>
            <person name="Li X."/>
            <person name="Zheng H."/>
            <person name="Cong L."/>
            <person name="Lin L."/>
            <person name="Yin J."/>
            <person name="Geng J."/>
            <person name="Li G."/>
            <person name="Shi J."/>
            <person name="Liu J."/>
            <person name="Lv H."/>
            <person name="Li J."/>
            <person name="Wang J."/>
            <person name="Deng Y."/>
            <person name="Ran L."/>
            <person name="Shi X."/>
            <person name="Wang X."/>
            <person name="Wu Q."/>
            <person name="Li C."/>
            <person name="Ren X."/>
            <person name="Wang J."/>
            <person name="Wang X."/>
            <person name="Li D."/>
            <person name="Liu D."/>
            <person name="Zhang X."/>
            <person name="Ji Z."/>
            <person name="Zhao W."/>
            <person name="Sun Y."/>
            <person name="Zhang Z."/>
            <person name="Bao J."/>
            <person name="Han Y."/>
            <person name="Dong L."/>
            <person name="Ji J."/>
            <person name="Chen P."/>
            <person name="Wu S."/>
            <person name="Liu J."/>
            <person name="Xiao Y."/>
            <person name="Bu D."/>
            <person name="Tan J."/>
            <person name="Yang L."/>
            <person name="Ye C."/>
            <person name="Zhang J."/>
            <person name="Xu J."/>
            <person name="Zhou Y."/>
            <person name="Yu Y."/>
            <person name="Zhang B."/>
            <person name="Zhuang S."/>
            <person name="Wei H."/>
            <person name="Liu B."/>
            <person name="Lei M."/>
            <person name="Yu H."/>
            <person name="Li Y."/>
            <person name="Xu H."/>
            <person name="Wei S."/>
            <person name="He X."/>
            <person name="Fang L."/>
            <person name="Zhang Z."/>
            <person name="Zhang Y."/>
            <person name="Huang X."/>
            <person name="Su Z."/>
            <person name="Tong W."/>
            <person name="Li J."/>
            <person name="Tong Z."/>
            <person name="Li S."/>
            <person name="Ye J."/>
            <person name="Wang L."/>
            <person name="Fang L."/>
            <person name="Lei T."/>
            <person name="Chen C.-S."/>
            <person name="Chen H.-C."/>
            <person name="Xu Z."/>
            <person name="Li H."/>
            <person name="Huang H."/>
            <person name="Zhang F."/>
            <person name="Xu H."/>
            <person name="Li N."/>
            <person name="Zhao C."/>
            <person name="Li S."/>
            <person name="Dong L."/>
            <person name="Huang Y."/>
            <person name="Li L."/>
            <person name="Xi Y."/>
            <person name="Qi Q."/>
            <person name="Li W."/>
            <person name="Zhang B."/>
            <person name="Hu W."/>
            <person name="Zhang Y."/>
            <person name="Tian X."/>
            <person name="Jiao Y."/>
            <person name="Liang X."/>
            <person name="Jin J."/>
            <person name="Gao L."/>
            <person name="Zheng W."/>
            <person name="Hao B."/>
            <person name="Liu S.-M."/>
            <person name="Wang W."/>
            <person name="Yuan L."/>
            <person name="Cao M."/>
            <person name="McDermott J."/>
            <person name="Samudrala R."/>
            <person name="Wang J."/>
            <person name="Wong G.K.-S."/>
            <person name="Yang H."/>
        </authorList>
    </citation>
    <scope>NUCLEOTIDE SEQUENCE [LARGE SCALE GENOMIC DNA]</scope>
    <source>
        <strain>cv. Nipponbare</strain>
    </source>
</reference>
<reference key="5">
    <citation type="journal article" date="2003" name="Science">
        <title>Collection, mapping, and annotation of over 28,000 cDNA clones from japonica rice.</title>
        <authorList>
            <consortium name="The rice full-length cDNA consortium"/>
        </authorList>
    </citation>
    <scope>NUCLEOTIDE SEQUENCE [LARGE SCALE MRNA] (ISOFORMS 1 AND 2)</scope>
    <source>
        <strain>cv. Nipponbare</strain>
    </source>
</reference>
<reference key="6">
    <citation type="journal article" date="2006" name="Mol. Genet. Genomics">
        <title>Genome-wide analysis of cyclin family in rice (Oryza sativa L.).</title>
        <authorList>
            <person name="La H."/>
            <person name="Li J."/>
            <person name="Ji Z."/>
            <person name="Cheng Y."/>
            <person name="Li X."/>
            <person name="Jiang S."/>
            <person name="Venkatesh P.N."/>
            <person name="Ramachandran S."/>
        </authorList>
    </citation>
    <scope>GENE FAMILY</scope>
    <scope>NOMENCLATURE</scope>
</reference>
<accession>Q6Z7H3</accession>
<accession>B7F0D1</accession>
<accession>Q6Z7H4</accession>
<dbReference type="EMBL" id="AP004856">
    <property type="protein sequence ID" value="BAD17159.1"/>
    <property type="molecule type" value="Genomic_DNA"/>
</dbReference>
<dbReference type="EMBL" id="AP004856">
    <property type="protein sequence ID" value="BAD17160.1"/>
    <property type="molecule type" value="Genomic_DNA"/>
</dbReference>
<dbReference type="EMBL" id="AP008208">
    <property type="protein sequence ID" value="BAF08654.1"/>
    <property type="molecule type" value="Genomic_DNA"/>
</dbReference>
<dbReference type="EMBL" id="AP014958">
    <property type="protein sequence ID" value="BAS78472.1"/>
    <property type="molecule type" value="Genomic_DNA"/>
</dbReference>
<dbReference type="EMBL" id="CM000139">
    <property type="protein sequence ID" value="EEE56895.1"/>
    <property type="molecule type" value="Genomic_DNA"/>
</dbReference>
<dbReference type="EMBL" id="AK102728">
    <property type="status" value="NOT_ANNOTATED_CDS"/>
    <property type="molecule type" value="mRNA"/>
</dbReference>
<dbReference type="EMBL" id="AK107537">
    <property type="protein sequence ID" value="BAG98078.1"/>
    <property type="molecule type" value="mRNA"/>
</dbReference>
<dbReference type="RefSeq" id="XP_015626103.1">
    <property type="nucleotide sequence ID" value="XM_015770617.1"/>
</dbReference>
<dbReference type="RefSeq" id="XP_015626104.1">
    <property type="nucleotide sequence ID" value="XM_015770618.1"/>
</dbReference>
<dbReference type="RefSeq" id="XP_015626105.1">
    <property type="nucleotide sequence ID" value="XM_015770619.1"/>
</dbReference>
<dbReference type="SMR" id="Q6Z7H3"/>
<dbReference type="FunCoup" id="Q6Z7H3">
    <property type="interactions" value="1455"/>
</dbReference>
<dbReference type="STRING" id="39947.Q6Z7H3"/>
<dbReference type="PaxDb" id="39947-Q6Z7H3"/>
<dbReference type="EnsemblPlants" id="Os02t0438200-01">
    <molecule id="Q6Z7H3-1"/>
    <property type="protein sequence ID" value="Os02t0438200-01"/>
    <property type="gene ID" value="Os02g0438200"/>
</dbReference>
<dbReference type="Gramene" id="Os02t0438200-01">
    <molecule id="Q6Z7H3-1"/>
    <property type="protein sequence ID" value="Os02t0438200-01"/>
    <property type="gene ID" value="Os02g0438200"/>
</dbReference>
<dbReference type="KEGG" id="dosa:Os02g0438200"/>
<dbReference type="eggNOG" id="KOG0834">
    <property type="taxonomic scope" value="Eukaryota"/>
</dbReference>
<dbReference type="HOGENOM" id="CLU_022000_8_2_1"/>
<dbReference type="InParanoid" id="Q6Z7H3"/>
<dbReference type="OMA" id="DHLCVER"/>
<dbReference type="OrthoDB" id="25002at2759"/>
<dbReference type="Proteomes" id="UP000000763">
    <property type="component" value="Chromosome 2"/>
</dbReference>
<dbReference type="Proteomes" id="UP000007752">
    <property type="component" value="Chromosome 2"/>
</dbReference>
<dbReference type="Proteomes" id="UP000059680">
    <property type="component" value="Chromosome 2"/>
</dbReference>
<dbReference type="ExpressionAtlas" id="Q6Z7H3">
    <property type="expression patterns" value="baseline and differential"/>
</dbReference>
<dbReference type="GO" id="GO:0008024">
    <property type="term" value="C:cyclin/CDK positive transcription elongation factor complex"/>
    <property type="evidence" value="ECO:0000318"/>
    <property type="project" value="GO_Central"/>
</dbReference>
<dbReference type="GO" id="GO:0005634">
    <property type="term" value="C:nucleus"/>
    <property type="evidence" value="ECO:0000318"/>
    <property type="project" value="GO_Central"/>
</dbReference>
<dbReference type="GO" id="GO:0061575">
    <property type="term" value="F:cyclin-dependent protein serine/threonine kinase activator activity"/>
    <property type="evidence" value="ECO:0000318"/>
    <property type="project" value="GO_Central"/>
</dbReference>
<dbReference type="GO" id="GO:0032786">
    <property type="term" value="P:positive regulation of DNA-templated transcription, elongation"/>
    <property type="evidence" value="ECO:0000318"/>
    <property type="project" value="GO_Central"/>
</dbReference>
<dbReference type="GO" id="GO:0045944">
    <property type="term" value="P:positive regulation of transcription by RNA polymerase II"/>
    <property type="evidence" value="ECO:0000318"/>
    <property type="project" value="GO_Central"/>
</dbReference>
<dbReference type="FunFam" id="1.10.472.10:FF:000081">
    <property type="entry name" value="Cyclin family protein"/>
    <property type="match status" value="1"/>
</dbReference>
<dbReference type="FunFam" id="1.10.472.10:FF:000079">
    <property type="entry name" value="Putative cyclin-T1 family protein"/>
    <property type="match status" value="1"/>
</dbReference>
<dbReference type="Gene3D" id="1.10.472.10">
    <property type="entry name" value="Cyclin-like"/>
    <property type="match status" value="2"/>
</dbReference>
<dbReference type="InterPro" id="IPR013763">
    <property type="entry name" value="Cyclin-like_dom"/>
</dbReference>
<dbReference type="InterPro" id="IPR036915">
    <property type="entry name" value="Cyclin-like_sf"/>
</dbReference>
<dbReference type="InterPro" id="IPR043198">
    <property type="entry name" value="Cyclin/Ssn8"/>
</dbReference>
<dbReference type="InterPro" id="IPR006671">
    <property type="entry name" value="Cyclin_N"/>
</dbReference>
<dbReference type="PANTHER" id="PTHR10026">
    <property type="entry name" value="CYCLIN"/>
    <property type="match status" value="1"/>
</dbReference>
<dbReference type="Pfam" id="PF00134">
    <property type="entry name" value="Cyclin_N"/>
    <property type="match status" value="1"/>
</dbReference>
<dbReference type="SMART" id="SM00385">
    <property type="entry name" value="CYCLIN"/>
    <property type="match status" value="2"/>
</dbReference>
<dbReference type="SUPFAM" id="SSF47954">
    <property type="entry name" value="Cyclin-like"/>
    <property type="match status" value="2"/>
</dbReference>
<protein>
    <recommendedName>
        <fullName>Cyclin-T1-2</fullName>
        <shortName>CycT1;2</shortName>
    </recommendedName>
</protein>
<comment type="alternative products">
    <event type="alternative splicing"/>
    <isoform>
        <id>Q6Z7H3-1</id>
        <name>1</name>
        <sequence type="displayed"/>
    </isoform>
    <isoform>
        <id>Q6Z7H3-2</id>
        <name>2</name>
        <sequence type="described" ref="VSP_025287 VSP_025288"/>
    </isoform>
</comment>
<comment type="similarity">
    <text evidence="3">Belongs to the cyclin family. Cyclin T subfamily.</text>
</comment>
<evidence type="ECO:0000256" key="1">
    <source>
        <dbReference type="SAM" id="MobiDB-lite"/>
    </source>
</evidence>
<evidence type="ECO:0000303" key="2">
    <source>
    </source>
</evidence>
<evidence type="ECO:0000305" key="3"/>
<evidence type="ECO:0000312" key="4">
    <source>
        <dbReference type="EMBL" id="EEE56895.1"/>
    </source>
</evidence>
<organism>
    <name type="scientific">Oryza sativa subsp. japonica</name>
    <name type="common">Rice</name>
    <dbReference type="NCBI Taxonomy" id="39947"/>
    <lineage>
        <taxon>Eukaryota</taxon>
        <taxon>Viridiplantae</taxon>
        <taxon>Streptophyta</taxon>
        <taxon>Embryophyta</taxon>
        <taxon>Tracheophyta</taxon>
        <taxon>Spermatophyta</taxon>
        <taxon>Magnoliopsida</taxon>
        <taxon>Liliopsida</taxon>
        <taxon>Poales</taxon>
        <taxon>Poaceae</taxon>
        <taxon>BOP clade</taxon>
        <taxon>Oryzoideae</taxon>
        <taxon>Oryzeae</taxon>
        <taxon>Oryzinae</taxon>
        <taxon>Oryza</taxon>
        <taxon>Oryza sativa</taxon>
    </lineage>
</organism>
<name>CCT12_ORYSJ</name>
<sequence>MDGESQTSKLSCEHMYSWYFTREELEKFSPSRKDGITEIMESEIRQLYCSFIRDVGIRLKLPQMTIATAIMFCHRFYLYQSLAKNGWQTIATVCIFLASKVEDTPCPLDQVIRVAYGTMYRRDPATARRIHQKDVFEKQKALILTGERLVLTTVRFDFNIQHPYRPLLDAMEKLGISQKEVKQVAWNFVNDWLKTTLCLQYKPQYIAAGSLYLAAKFQNVKLPVHGGHVWWHQFDVAPKPLEAVLQQMREMVHMKAKLFAHPSPAKQKEVLFEGMLLISNSPDSVLTQSSLSVSSSSPEIGDPNDHLQVDSSQDIVHIEDRSKSYPERNLSNLTADMNNPGKTHNKESLDQALKIKHGGLISCNQQIPLDAIAKIDSSTAKCVEQNIGICCSSSNTFNGKILNPFSISQRSGDKTKLCSEGGSSLTDVDSKSTQSVEPPTTICNHTSDSLNVDSLCSDQRLANSTAGTTEKASFVLPVQIKVDHLCVERKKVDVARIKDLLMKRKRRRERQGRCIPSVDLSEEAWIERELESGIVFKKVDHVVASYDLSDEGWIERELESGIVIGQKNDQPVSLDGLTEDDWIERELESGIIVEPGPAGKKLKSKLLSEGHEIMNSRWEINGKSMQNQVT</sequence>